<evidence type="ECO:0000255" key="1">
    <source>
        <dbReference type="HAMAP-Rule" id="MF_00460"/>
    </source>
</evidence>
<accession>B8D946</accession>
<dbReference type="EMBL" id="CP001161">
    <property type="protein sequence ID" value="ACL30617.1"/>
    <property type="molecule type" value="Genomic_DNA"/>
</dbReference>
<dbReference type="RefSeq" id="WP_009874207.1">
    <property type="nucleotide sequence ID" value="NC_011833.1"/>
</dbReference>
<dbReference type="SMR" id="B8D946"/>
<dbReference type="KEGG" id="bap:BUAP5A_248"/>
<dbReference type="HOGENOM" id="CLU_150721_1_0_6"/>
<dbReference type="OrthoDB" id="9796575at2"/>
<dbReference type="Proteomes" id="UP000006904">
    <property type="component" value="Chromosome"/>
</dbReference>
<dbReference type="Gene3D" id="3.10.20.280">
    <property type="entry name" value="RnfH-like"/>
    <property type="match status" value="1"/>
</dbReference>
<dbReference type="HAMAP" id="MF_00460">
    <property type="entry name" value="UPF0125_RnfH"/>
    <property type="match status" value="1"/>
</dbReference>
<dbReference type="InterPro" id="IPR016155">
    <property type="entry name" value="Mopterin_synth/thiamin_S_b"/>
</dbReference>
<dbReference type="InterPro" id="IPR005346">
    <property type="entry name" value="RnfH"/>
</dbReference>
<dbReference type="InterPro" id="IPR037021">
    <property type="entry name" value="RnfH_sf"/>
</dbReference>
<dbReference type="NCBIfam" id="NF002490">
    <property type="entry name" value="PRK01777.1"/>
    <property type="match status" value="1"/>
</dbReference>
<dbReference type="PANTHER" id="PTHR37483">
    <property type="entry name" value="UPF0125 PROTEIN RATB"/>
    <property type="match status" value="1"/>
</dbReference>
<dbReference type="PANTHER" id="PTHR37483:SF1">
    <property type="entry name" value="UPF0125 PROTEIN RATB"/>
    <property type="match status" value="1"/>
</dbReference>
<dbReference type="Pfam" id="PF03658">
    <property type="entry name" value="Ub-RnfH"/>
    <property type="match status" value="1"/>
</dbReference>
<dbReference type="SUPFAM" id="SSF54285">
    <property type="entry name" value="MoaD/ThiS"/>
    <property type="match status" value="1"/>
</dbReference>
<reference key="1">
    <citation type="journal article" date="2009" name="Science">
        <title>The dynamics and time scale of ongoing genomic erosion in symbiotic bacteria.</title>
        <authorList>
            <person name="Moran N.A."/>
            <person name="McLaughlin H.J."/>
            <person name="Sorek R."/>
        </authorList>
    </citation>
    <scope>NUCLEOTIDE SEQUENCE [LARGE SCALE GENOMIC DNA]</scope>
    <source>
        <strain>5A</strain>
    </source>
</reference>
<proteinExistence type="inferred from homology"/>
<name>RNFH_BUCA5</name>
<organism>
    <name type="scientific">Buchnera aphidicola subsp. Acyrthosiphon pisum (strain 5A)</name>
    <dbReference type="NCBI Taxonomy" id="563178"/>
    <lineage>
        <taxon>Bacteria</taxon>
        <taxon>Pseudomonadati</taxon>
        <taxon>Pseudomonadota</taxon>
        <taxon>Gammaproteobacteria</taxon>
        <taxon>Enterobacterales</taxon>
        <taxon>Erwiniaceae</taxon>
        <taxon>Buchnera</taxon>
    </lineage>
</organism>
<gene>
    <name evidence="1" type="primary">rnfH</name>
    <name type="ordered locus">BUAP5A_248</name>
</gene>
<sequence>MKIIKVTVVYALPKIQYICQVDIALGSTVKDAILESNLLNLTNDVSFHHNRIGIYNKTVHLKFKIKDGDRIEIYRNLTIDPKEWRRNNIFLSKKLKKIY</sequence>
<protein>
    <recommendedName>
        <fullName evidence="1">Protein RnfH</fullName>
    </recommendedName>
</protein>
<feature type="chain" id="PRO_1000200167" description="Protein RnfH">
    <location>
        <begin position="1"/>
        <end position="99"/>
    </location>
</feature>
<comment type="similarity">
    <text evidence="1">Belongs to the UPF0125 (RnfH) family.</text>
</comment>